<accession>Q49WY4</accession>
<comment type="function">
    <text evidence="1">Large subunit of the glutamine-dependent carbamoyl phosphate synthetase (CPSase). CPSase catalyzes the formation of carbamoyl phosphate from the ammonia moiety of glutamine, carbonate, and phosphate donated by ATP, constituting the first step of 2 biosynthetic pathways, one leading to arginine and/or urea and the other to pyrimidine nucleotides. The large subunit (synthetase) binds the substrates ammonia (free or transferred from glutamine from the small subunit), hydrogencarbonate and ATP and carries out an ATP-coupled ligase reaction, activating hydrogencarbonate by forming carboxy phosphate which reacts with ammonia to form carbamoyl phosphate.</text>
</comment>
<comment type="catalytic activity">
    <reaction evidence="1">
        <text>hydrogencarbonate + L-glutamine + 2 ATP + H2O = carbamoyl phosphate + L-glutamate + 2 ADP + phosphate + 2 H(+)</text>
        <dbReference type="Rhea" id="RHEA:18633"/>
        <dbReference type="ChEBI" id="CHEBI:15377"/>
        <dbReference type="ChEBI" id="CHEBI:15378"/>
        <dbReference type="ChEBI" id="CHEBI:17544"/>
        <dbReference type="ChEBI" id="CHEBI:29985"/>
        <dbReference type="ChEBI" id="CHEBI:30616"/>
        <dbReference type="ChEBI" id="CHEBI:43474"/>
        <dbReference type="ChEBI" id="CHEBI:58228"/>
        <dbReference type="ChEBI" id="CHEBI:58359"/>
        <dbReference type="ChEBI" id="CHEBI:456216"/>
        <dbReference type="EC" id="6.3.5.5"/>
    </reaction>
</comment>
<comment type="catalytic activity">
    <molecule>Carbamoyl phosphate synthase large chain</molecule>
    <reaction evidence="1">
        <text>hydrogencarbonate + NH4(+) + 2 ATP = carbamoyl phosphate + 2 ADP + phosphate + 2 H(+)</text>
        <dbReference type="Rhea" id="RHEA:18029"/>
        <dbReference type="ChEBI" id="CHEBI:15378"/>
        <dbReference type="ChEBI" id="CHEBI:17544"/>
        <dbReference type="ChEBI" id="CHEBI:28938"/>
        <dbReference type="ChEBI" id="CHEBI:30616"/>
        <dbReference type="ChEBI" id="CHEBI:43474"/>
        <dbReference type="ChEBI" id="CHEBI:58228"/>
        <dbReference type="ChEBI" id="CHEBI:456216"/>
        <dbReference type="EC" id="6.3.4.16"/>
    </reaction>
</comment>
<comment type="cofactor">
    <cofactor evidence="1">
        <name>Mg(2+)</name>
        <dbReference type="ChEBI" id="CHEBI:18420"/>
    </cofactor>
    <cofactor evidence="1">
        <name>Mn(2+)</name>
        <dbReference type="ChEBI" id="CHEBI:29035"/>
    </cofactor>
    <text evidence="1">Binds 4 Mg(2+) or Mn(2+) ions per subunit.</text>
</comment>
<comment type="pathway">
    <text evidence="1">Amino-acid biosynthesis; L-arginine biosynthesis; carbamoyl phosphate from bicarbonate: step 1/1.</text>
</comment>
<comment type="pathway">
    <text evidence="1">Pyrimidine metabolism; UMP biosynthesis via de novo pathway; (S)-dihydroorotate from bicarbonate: step 1/3.</text>
</comment>
<comment type="subunit">
    <text evidence="1">Composed of two chains; the small (or glutamine) chain promotes the hydrolysis of glutamine to ammonia, which is used by the large (or ammonia) chain to synthesize carbamoyl phosphate. Tetramer of heterodimers (alpha,beta)4.</text>
</comment>
<comment type="domain">
    <text evidence="1">The large subunit is composed of 2 ATP-grasp domains that are involved in binding the 2 ATP molecules needed for carbamoyl phosphate synthesis. The N-terminal ATP-grasp domain (referred to as the carboxyphosphate synthetic component) catalyzes the ATP-dependent phosphorylation of hydrogencarbonate to carboxyphosphate and the subsequent nucleophilic attack by ammonia to form a carbamate intermediate. The C-terminal ATP-grasp domain (referred to as the carbamoyl phosphate synthetic component) then catalyzes the phosphorylation of carbamate with the second ATP to form the end product carbamoyl phosphate. The reactive and unstable enzyme intermediates are sequentially channeled from one active site to the next through the interior of the protein over a distance of at least 96 A.</text>
</comment>
<comment type="similarity">
    <text evidence="1">Belongs to the CarB family.</text>
</comment>
<proteinExistence type="inferred from homology"/>
<feature type="chain" id="PRO_0000145046" description="Carbamoyl phosphate synthase large chain">
    <location>
        <begin position="1"/>
        <end position="1057"/>
    </location>
</feature>
<feature type="domain" description="ATP-grasp 1" evidence="1">
    <location>
        <begin position="133"/>
        <end position="327"/>
    </location>
</feature>
<feature type="domain" description="ATP-grasp 2" evidence="1">
    <location>
        <begin position="671"/>
        <end position="861"/>
    </location>
</feature>
<feature type="domain" description="MGS-like" evidence="1">
    <location>
        <begin position="930"/>
        <end position="1057"/>
    </location>
</feature>
<feature type="region of interest" description="Carboxyphosphate synthetic domain" evidence="1">
    <location>
        <begin position="1"/>
        <end position="401"/>
    </location>
</feature>
<feature type="region of interest" description="Oligomerization domain" evidence="1">
    <location>
        <begin position="402"/>
        <end position="546"/>
    </location>
</feature>
<feature type="region of interest" description="Carbamoyl phosphate synthetic domain" evidence="1">
    <location>
        <begin position="547"/>
        <end position="929"/>
    </location>
</feature>
<feature type="region of interest" description="Allosteric domain" evidence="1">
    <location>
        <begin position="930"/>
        <end position="1057"/>
    </location>
</feature>
<feature type="binding site" evidence="1">
    <location>
        <position position="129"/>
    </location>
    <ligand>
        <name>ATP</name>
        <dbReference type="ChEBI" id="CHEBI:30616"/>
        <label>1</label>
    </ligand>
</feature>
<feature type="binding site" evidence="1">
    <location>
        <position position="169"/>
    </location>
    <ligand>
        <name>ATP</name>
        <dbReference type="ChEBI" id="CHEBI:30616"/>
        <label>1</label>
    </ligand>
</feature>
<feature type="binding site" evidence="1">
    <location>
        <position position="175"/>
    </location>
    <ligand>
        <name>ATP</name>
        <dbReference type="ChEBI" id="CHEBI:30616"/>
        <label>1</label>
    </ligand>
</feature>
<feature type="binding site" evidence="1">
    <location>
        <position position="176"/>
    </location>
    <ligand>
        <name>ATP</name>
        <dbReference type="ChEBI" id="CHEBI:30616"/>
        <label>1</label>
    </ligand>
</feature>
<feature type="binding site" evidence="1">
    <location>
        <position position="208"/>
    </location>
    <ligand>
        <name>ATP</name>
        <dbReference type="ChEBI" id="CHEBI:30616"/>
        <label>1</label>
    </ligand>
</feature>
<feature type="binding site" evidence="1">
    <location>
        <position position="210"/>
    </location>
    <ligand>
        <name>ATP</name>
        <dbReference type="ChEBI" id="CHEBI:30616"/>
        <label>1</label>
    </ligand>
</feature>
<feature type="binding site" evidence="1">
    <location>
        <position position="215"/>
    </location>
    <ligand>
        <name>ATP</name>
        <dbReference type="ChEBI" id="CHEBI:30616"/>
        <label>1</label>
    </ligand>
</feature>
<feature type="binding site" evidence="1">
    <location>
        <position position="241"/>
    </location>
    <ligand>
        <name>ATP</name>
        <dbReference type="ChEBI" id="CHEBI:30616"/>
        <label>1</label>
    </ligand>
</feature>
<feature type="binding site" evidence="1">
    <location>
        <position position="242"/>
    </location>
    <ligand>
        <name>ATP</name>
        <dbReference type="ChEBI" id="CHEBI:30616"/>
        <label>1</label>
    </ligand>
</feature>
<feature type="binding site" evidence="1">
    <location>
        <position position="243"/>
    </location>
    <ligand>
        <name>ATP</name>
        <dbReference type="ChEBI" id="CHEBI:30616"/>
        <label>1</label>
    </ligand>
</feature>
<feature type="binding site" evidence="1">
    <location>
        <position position="284"/>
    </location>
    <ligand>
        <name>ATP</name>
        <dbReference type="ChEBI" id="CHEBI:30616"/>
        <label>1</label>
    </ligand>
</feature>
<feature type="binding site" evidence="1">
    <location>
        <position position="284"/>
    </location>
    <ligand>
        <name>Mg(2+)</name>
        <dbReference type="ChEBI" id="CHEBI:18420"/>
        <label>1</label>
    </ligand>
</feature>
<feature type="binding site" evidence="1">
    <location>
        <position position="284"/>
    </location>
    <ligand>
        <name>Mn(2+)</name>
        <dbReference type="ChEBI" id="CHEBI:29035"/>
        <label>1</label>
    </ligand>
</feature>
<feature type="binding site" evidence="1">
    <location>
        <position position="298"/>
    </location>
    <ligand>
        <name>ATP</name>
        <dbReference type="ChEBI" id="CHEBI:30616"/>
        <label>1</label>
    </ligand>
</feature>
<feature type="binding site" evidence="1">
    <location>
        <position position="298"/>
    </location>
    <ligand>
        <name>Mg(2+)</name>
        <dbReference type="ChEBI" id="CHEBI:18420"/>
        <label>1</label>
    </ligand>
</feature>
<feature type="binding site" evidence="1">
    <location>
        <position position="298"/>
    </location>
    <ligand>
        <name>Mg(2+)</name>
        <dbReference type="ChEBI" id="CHEBI:18420"/>
        <label>2</label>
    </ligand>
</feature>
<feature type="binding site" evidence="1">
    <location>
        <position position="298"/>
    </location>
    <ligand>
        <name>Mn(2+)</name>
        <dbReference type="ChEBI" id="CHEBI:29035"/>
        <label>1</label>
    </ligand>
</feature>
<feature type="binding site" evidence="1">
    <location>
        <position position="298"/>
    </location>
    <ligand>
        <name>Mn(2+)</name>
        <dbReference type="ChEBI" id="CHEBI:29035"/>
        <label>2</label>
    </ligand>
</feature>
<feature type="binding site" evidence="1">
    <location>
        <position position="300"/>
    </location>
    <ligand>
        <name>Mg(2+)</name>
        <dbReference type="ChEBI" id="CHEBI:18420"/>
        <label>2</label>
    </ligand>
</feature>
<feature type="binding site" evidence="1">
    <location>
        <position position="300"/>
    </location>
    <ligand>
        <name>Mn(2+)</name>
        <dbReference type="ChEBI" id="CHEBI:29035"/>
        <label>2</label>
    </ligand>
</feature>
<feature type="binding site" evidence="1">
    <location>
        <position position="707"/>
    </location>
    <ligand>
        <name>ATP</name>
        <dbReference type="ChEBI" id="CHEBI:30616"/>
        <label>2</label>
    </ligand>
</feature>
<feature type="binding site" evidence="1">
    <location>
        <position position="746"/>
    </location>
    <ligand>
        <name>ATP</name>
        <dbReference type="ChEBI" id="CHEBI:30616"/>
        <label>2</label>
    </ligand>
</feature>
<feature type="binding site" evidence="1">
    <location>
        <position position="748"/>
    </location>
    <ligand>
        <name>ATP</name>
        <dbReference type="ChEBI" id="CHEBI:30616"/>
        <label>2</label>
    </ligand>
</feature>
<feature type="binding site" evidence="1">
    <location>
        <position position="752"/>
    </location>
    <ligand>
        <name>ATP</name>
        <dbReference type="ChEBI" id="CHEBI:30616"/>
        <label>2</label>
    </ligand>
</feature>
<feature type="binding site" evidence="1">
    <location>
        <position position="777"/>
    </location>
    <ligand>
        <name>ATP</name>
        <dbReference type="ChEBI" id="CHEBI:30616"/>
        <label>2</label>
    </ligand>
</feature>
<feature type="binding site" evidence="1">
    <location>
        <position position="778"/>
    </location>
    <ligand>
        <name>ATP</name>
        <dbReference type="ChEBI" id="CHEBI:30616"/>
        <label>2</label>
    </ligand>
</feature>
<feature type="binding site" evidence="1">
    <location>
        <position position="779"/>
    </location>
    <ligand>
        <name>ATP</name>
        <dbReference type="ChEBI" id="CHEBI:30616"/>
        <label>2</label>
    </ligand>
</feature>
<feature type="binding site" evidence="1">
    <location>
        <position position="780"/>
    </location>
    <ligand>
        <name>ATP</name>
        <dbReference type="ChEBI" id="CHEBI:30616"/>
        <label>2</label>
    </ligand>
</feature>
<feature type="binding site" evidence="1">
    <location>
        <position position="820"/>
    </location>
    <ligand>
        <name>ATP</name>
        <dbReference type="ChEBI" id="CHEBI:30616"/>
        <label>2</label>
    </ligand>
</feature>
<feature type="binding site" evidence="1">
    <location>
        <position position="820"/>
    </location>
    <ligand>
        <name>Mg(2+)</name>
        <dbReference type="ChEBI" id="CHEBI:18420"/>
        <label>3</label>
    </ligand>
</feature>
<feature type="binding site" evidence="1">
    <location>
        <position position="820"/>
    </location>
    <ligand>
        <name>Mn(2+)</name>
        <dbReference type="ChEBI" id="CHEBI:29035"/>
        <label>3</label>
    </ligand>
</feature>
<feature type="binding site" evidence="1">
    <location>
        <position position="832"/>
    </location>
    <ligand>
        <name>ATP</name>
        <dbReference type="ChEBI" id="CHEBI:30616"/>
        <label>2</label>
    </ligand>
</feature>
<feature type="binding site" evidence="1">
    <location>
        <position position="832"/>
    </location>
    <ligand>
        <name>Mg(2+)</name>
        <dbReference type="ChEBI" id="CHEBI:18420"/>
        <label>3</label>
    </ligand>
</feature>
<feature type="binding site" evidence="1">
    <location>
        <position position="832"/>
    </location>
    <ligand>
        <name>Mg(2+)</name>
        <dbReference type="ChEBI" id="CHEBI:18420"/>
        <label>4</label>
    </ligand>
</feature>
<feature type="binding site" evidence="1">
    <location>
        <position position="832"/>
    </location>
    <ligand>
        <name>Mn(2+)</name>
        <dbReference type="ChEBI" id="CHEBI:29035"/>
        <label>3</label>
    </ligand>
</feature>
<feature type="binding site" evidence="1">
    <location>
        <position position="832"/>
    </location>
    <ligand>
        <name>Mn(2+)</name>
        <dbReference type="ChEBI" id="CHEBI:29035"/>
        <label>4</label>
    </ligand>
</feature>
<feature type="binding site" evidence="1">
    <location>
        <position position="834"/>
    </location>
    <ligand>
        <name>Mg(2+)</name>
        <dbReference type="ChEBI" id="CHEBI:18420"/>
        <label>4</label>
    </ligand>
</feature>
<feature type="binding site" evidence="1">
    <location>
        <position position="834"/>
    </location>
    <ligand>
        <name>Mn(2+)</name>
        <dbReference type="ChEBI" id="CHEBI:29035"/>
        <label>4</label>
    </ligand>
</feature>
<keyword id="KW-0028">Amino-acid biosynthesis</keyword>
<keyword id="KW-0055">Arginine biosynthesis</keyword>
<keyword id="KW-0067">ATP-binding</keyword>
<keyword id="KW-0436">Ligase</keyword>
<keyword id="KW-0460">Magnesium</keyword>
<keyword id="KW-0464">Manganese</keyword>
<keyword id="KW-0479">Metal-binding</keyword>
<keyword id="KW-0547">Nucleotide-binding</keyword>
<keyword id="KW-0665">Pyrimidine biosynthesis</keyword>
<keyword id="KW-1185">Reference proteome</keyword>
<keyword id="KW-0677">Repeat</keyword>
<name>CARB_STAS1</name>
<protein>
    <recommendedName>
        <fullName evidence="1">Carbamoyl phosphate synthase large chain</fullName>
        <ecNumber evidence="1">6.3.4.16</ecNumber>
        <ecNumber evidence="1">6.3.5.5</ecNumber>
    </recommendedName>
    <alternativeName>
        <fullName evidence="1">Carbamoyl phosphate synthetase ammonia chain</fullName>
    </alternativeName>
</protein>
<gene>
    <name evidence="1" type="primary">carB</name>
    <name type="ordered locus">SSP1569</name>
</gene>
<organism>
    <name type="scientific">Staphylococcus saprophyticus subsp. saprophyticus (strain ATCC 15305 / DSM 20229 / NCIMB 8711 / NCTC 7292 / S-41)</name>
    <dbReference type="NCBI Taxonomy" id="342451"/>
    <lineage>
        <taxon>Bacteria</taxon>
        <taxon>Bacillati</taxon>
        <taxon>Bacillota</taxon>
        <taxon>Bacilli</taxon>
        <taxon>Bacillales</taxon>
        <taxon>Staphylococcaceae</taxon>
        <taxon>Staphylococcus</taxon>
    </lineage>
</organism>
<sequence>MPKRQDIETILVIGSGPIIIGQAAEFDYAGTQACLALKEEGYRVILVNSNPATIMTDNEIADKVYIEPLTHDFIARIIRKEQPDALLPTLGGQTGLNMAIQLHDSGELEANNVKLLGTELESIQQAEDRELFRTLMNDLGVPVPESDIVNTVEQAFAFKEEVGYPLIVRPAFTMGGTGGGICHNDAEFKEIVTNGLHYSPATQCLIEKSIAGFKEIEYEVMRDKNDNAIVVCNMENIDPVGIHTGDSIVVAPSQTLSDVEYQMLRDVSLKVIRALGIEGGCNVQLALDPHSLDYYIIEVNPRVSRSSALASKATGYPIAKLAAKIAIGLTLDEMLNPITETSYAAFEPTLDYVISKIPRFPFDKFEKGERVLGTQMKATGEVMAIGRTYEESLLKAIRSLEYGVHHLGLPNGETFDLGYIKERIQDQDDERLFFIGEAIRRGTTLEEIHEMTKIDYFFLNKFQHIIDIEHDLKSNKGDIDYLKFAKNYGFSDRVIAHRFDMTEEEVYDLRQQNGIIPVYKMVDTCAAEFESATPYYYGTYEYENESVVTEKEKILVLGSGPIRIGQGVEFDYATVHAVWAIQQAGYEAIIVNNNPETVSTDFSISDKLYFEPLTEEDVMNIIDLEQPKGVVVQFGGQTAINLADKLAKHDVKILGTSLEDLNRAEDRKEFEALLHTIDVPQPNGKTATSPQEALENARSIGYPVVVRPSYVLGGRAMEIVNSDAELEDYMNQAVKASPDHPVLVDRYLTGKEIEVDAISDGETVIIPGIMEHIERAGVHSGDSIAVYPPQTLKQEEMTTLEDFTIRLAKGLNIVGLINIQFVIAHDGVYVLEVNPRSSRTVPFLSKITNIQMAQLAMRAIIGDKLVDLGYQPGIQPYTEGVFVKAPVFSFNKLKNVDITLGPEMKSTGEVMGKDATMEKALFKGLTASGMEVKDHGTVLMTVSDKDKDEIVSIAQRLNEVGYRILATQGTARKLAENNIPSEVVGKIGGEDDLLTRIQNGEVQIVVNTMTKGKEFERDGFQIRRASVENGVPCLTSLDTVVALTRVIESMTFTMKNM</sequence>
<evidence type="ECO:0000255" key="1">
    <source>
        <dbReference type="HAMAP-Rule" id="MF_01210"/>
    </source>
</evidence>
<dbReference type="EC" id="6.3.4.16" evidence="1"/>
<dbReference type="EC" id="6.3.5.5" evidence="1"/>
<dbReference type="EMBL" id="AP008934">
    <property type="protein sequence ID" value="BAE18714.1"/>
    <property type="molecule type" value="Genomic_DNA"/>
</dbReference>
<dbReference type="RefSeq" id="WP_011303311.1">
    <property type="nucleotide sequence ID" value="NC_007350.1"/>
</dbReference>
<dbReference type="SMR" id="Q49WY4"/>
<dbReference type="GeneID" id="3615313"/>
<dbReference type="KEGG" id="ssp:SSP1569"/>
<dbReference type="PATRIC" id="fig|342451.11.peg.1571"/>
<dbReference type="eggNOG" id="COG0458">
    <property type="taxonomic scope" value="Bacteria"/>
</dbReference>
<dbReference type="HOGENOM" id="CLU_000513_1_0_9"/>
<dbReference type="OrthoDB" id="9804197at2"/>
<dbReference type="UniPathway" id="UPA00068">
    <property type="reaction ID" value="UER00171"/>
</dbReference>
<dbReference type="UniPathway" id="UPA00070">
    <property type="reaction ID" value="UER00115"/>
</dbReference>
<dbReference type="Proteomes" id="UP000006371">
    <property type="component" value="Chromosome"/>
</dbReference>
<dbReference type="GO" id="GO:0005737">
    <property type="term" value="C:cytoplasm"/>
    <property type="evidence" value="ECO:0007669"/>
    <property type="project" value="TreeGrafter"/>
</dbReference>
<dbReference type="GO" id="GO:0005524">
    <property type="term" value="F:ATP binding"/>
    <property type="evidence" value="ECO:0007669"/>
    <property type="project" value="UniProtKB-UniRule"/>
</dbReference>
<dbReference type="GO" id="GO:0004087">
    <property type="term" value="F:carbamoyl-phosphate synthase (ammonia) activity"/>
    <property type="evidence" value="ECO:0007669"/>
    <property type="project" value="RHEA"/>
</dbReference>
<dbReference type="GO" id="GO:0004088">
    <property type="term" value="F:carbamoyl-phosphate synthase (glutamine-hydrolyzing) activity"/>
    <property type="evidence" value="ECO:0007669"/>
    <property type="project" value="UniProtKB-UniRule"/>
</dbReference>
<dbReference type="GO" id="GO:0046872">
    <property type="term" value="F:metal ion binding"/>
    <property type="evidence" value="ECO:0007669"/>
    <property type="project" value="UniProtKB-KW"/>
</dbReference>
<dbReference type="GO" id="GO:0044205">
    <property type="term" value="P:'de novo' UMP biosynthetic process"/>
    <property type="evidence" value="ECO:0007669"/>
    <property type="project" value="UniProtKB-UniRule"/>
</dbReference>
<dbReference type="GO" id="GO:0006541">
    <property type="term" value="P:glutamine metabolic process"/>
    <property type="evidence" value="ECO:0007669"/>
    <property type="project" value="TreeGrafter"/>
</dbReference>
<dbReference type="GO" id="GO:0006526">
    <property type="term" value="P:L-arginine biosynthetic process"/>
    <property type="evidence" value="ECO:0007669"/>
    <property type="project" value="UniProtKB-UniRule"/>
</dbReference>
<dbReference type="CDD" id="cd01424">
    <property type="entry name" value="MGS_CPS_II"/>
    <property type="match status" value="1"/>
</dbReference>
<dbReference type="FunFam" id="1.10.1030.10:FF:000002">
    <property type="entry name" value="Carbamoyl-phosphate synthase large chain"/>
    <property type="match status" value="1"/>
</dbReference>
<dbReference type="FunFam" id="3.30.1490.20:FF:000001">
    <property type="entry name" value="Carbamoyl-phosphate synthase large chain"/>
    <property type="match status" value="1"/>
</dbReference>
<dbReference type="FunFam" id="3.30.470.20:FF:000001">
    <property type="entry name" value="Carbamoyl-phosphate synthase large chain"/>
    <property type="match status" value="1"/>
</dbReference>
<dbReference type="FunFam" id="3.30.470.20:FF:000026">
    <property type="entry name" value="Carbamoyl-phosphate synthase large chain"/>
    <property type="match status" value="1"/>
</dbReference>
<dbReference type="FunFam" id="3.40.50.1380:FF:000011">
    <property type="entry name" value="Carbamoyl-phosphate synthase large chain"/>
    <property type="match status" value="1"/>
</dbReference>
<dbReference type="FunFam" id="3.40.50.20:FF:000001">
    <property type="entry name" value="Carbamoyl-phosphate synthase large chain"/>
    <property type="match status" value="2"/>
</dbReference>
<dbReference type="Gene3D" id="3.40.50.20">
    <property type="match status" value="2"/>
</dbReference>
<dbReference type="Gene3D" id="3.30.1490.20">
    <property type="entry name" value="ATP-grasp fold, A domain"/>
    <property type="match status" value="1"/>
</dbReference>
<dbReference type="Gene3D" id="3.30.470.20">
    <property type="entry name" value="ATP-grasp fold, B domain"/>
    <property type="match status" value="2"/>
</dbReference>
<dbReference type="Gene3D" id="1.10.1030.10">
    <property type="entry name" value="Carbamoyl-phosphate synthetase, large subunit oligomerisation domain"/>
    <property type="match status" value="1"/>
</dbReference>
<dbReference type="Gene3D" id="3.40.50.1380">
    <property type="entry name" value="Methylglyoxal synthase-like domain"/>
    <property type="match status" value="1"/>
</dbReference>
<dbReference type="HAMAP" id="MF_01210_A">
    <property type="entry name" value="CPSase_L_chain_A"/>
    <property type="match status" value="1"/>
</dbReference>
<dbReference type="HAMAP" id="MF_01210_B">
    <property type="entry name" value="CPSase_L_chain_B"/>
    <property type="match status" value="1"/>
</dbReference>
<dbReference type="InterPro" id="IPR011761">
    <property type="entry name" value="ATP-grasp"/>
</dbReference>
<dbReference type="InterPro" id="IPR013815">
    <property type="entry name" value="ATP_grasp_subdomain_1"/>
</dbReference>
<dbReference type="InterPro" id="IPR006275">
    <property type="entry name" value="CarbamoylP_synth_lsu"/>
</dbReference>
<dbReference type="InterPro" id="IPR005480">
    <property type="entry name" value="CarbamoylP_synth_lsu_oligo"/>
</dbReference>
<dbReference type="InterPro" id="IPR036897">
    <property type="entry name" value="CarbamoylP_synth_lsu_oligo_sf"/>
</dbReference>
<dbReference type="InterPro" id="IPR005479">
    <property type="entry name" value="CbamoylP_synth_lsu-like_ATP-bd"/>
</dbReference>
<dbReference type="InterPro" id="IPR005483">
    <property type="entry name" value="CbamoylP_synth_lsu_CPSase_dom"/>
</dbReference>
<dbReference type="InterPro" id="IPR011607">
    <property type="entry name" value="MGS-like_dom"/>
</dbReference>
<dbReference type="InterPro" id="IPR036914">
    <property type="entry name" value="MGS-like_dom_sf"/>
</dbReference>
<dbReference type="InterPro" id="IPR033937">
    <property type="entry name" value="MGS_CPS_CarB"/>
</dbReference>
<dbReference type="InterPro" id="IPR016185">
    <property type="entry name" value="PreATP-grasp_dom_sf"/>
</dbReference>
<dbReference type="NCBIfam" id="TIGR01369">
    <property type="entry name" value="CPSaseII_lrg"/>
    <property type="match status" value="1"/>
</dbReference>
<dbReference type="NCBIfam" id="NF003671">
    <property type="entry name" value="PRK05294.1"/>
    <property type="match status" value="1"/>
</dbReference>
<dbReference type="NCBIfam" id="NF009455">
    <property type="entry name" value="PRK12815.1"/>
    <property type="match status" value="1"/>
</dbReference>
<dbReference type="PANTHER" id="PTHR11405:SF53">
    <property type="entry name" value="CARBAMOYL-PHOSPHATE SYNTHASE [AMMONIA], MITOCHONDRIAL"/>
    <property type="match status" value="1"/>
</dbReference>
<dbReference type="PANTHER" id="PTHR11405">
    <property type="entry name" value="CARBAMOYLTRANSFERASE FAMILY MEMBER"/>
    <property type="match status" value="1"/>
</dbReference>
<dbReference type="Pfam" id="PF02786">
    <property type="entry name" value="CPSase_L_D2"/>
    <property type="match status" value="2"/>
</dbReference>
<dbReference type="Pfam" id="PF02787">
    <property type="entry name" value="CPSase_L_D3"/>
    <property type="match status" value="1"/>
</dbReference>
<dbReference type="Pfam" id="PF02142">
    <property type="entry name" value="MGS"/>
    <property type="match status" value="1"/>
</dbReference>
<dbReference type="PRINTS" id="PR00098">
    <property type="entry name" value="CPSASE"/>
</dbReference>
<dbReference type="SMART" id="SM01096">
    <property type="entry name" value="CPSase_L_D3"/>
    <property type="match status" value="1"/>
</dbReference>
<dbReference type="SMART" id="SM01209">
    <property type="entry name" value="GARS_A"/>
    <property type="match status" value="1"/>
</dbReference>
<dbReference type="SMART" id="SM00851">
    <property type="entry name" value="MGS"/>
    <property type="match status" value="1"/>
</dbReference>
<dbReference type="SUPFAM" id="SSF48108">
    <property type="entry name" value="Carbamoyl phosphate synthetase, large subunit connection domain"/>
    <property type="match status" value="1"/>
</dbReference>
<dbReference type="SUPFAM" id="SSF56059">
    <property type="entry name" value="Glutathione synthetase ATP-binding domain-like"/>
    <property type="match status" value="2"/>
</dbReference>
<dbReference type="SUPFAM" id="SSF52335">
    <property type="entry name" value="Methylglyoxal synthase-like"/>
    <property type="match status" value="1"/>
</dbReference>
<dbReference type="SUPFAM" id="SSF52440">
    <property type="entry name" value="PreATP-grasp domain"/>
    <property type="match status" value="2"/>
</dbReference>
<dbReference type="PROSITE" id="PS50975">
    <property type="entry name" value="ATP_GRASP"/>
    <property type="match status" value="2"/>
</dbReference>
<dbReference type="PROSITE" id="PS00866">
    <property type="entry name" value="CPSASE_1"/>
    <property type="match status" value="2"/>
</dbReference>
<dbReference type="PROSITE" id="PS00867">
    <property type="entry name" value="CPSASE_2"/>
    <property type="match status" value="2"/>
</dbReference>
<dbReference type="PROSITE" id="PS51855">
    <property type="entry name" value="MGS"/>
    <property type="match status" value="1"/>
</dbReference>
<reference key="1">
    <citation type="journal article" date="2005" name="Proc. Natl. Acad. Sci. U.S.A.">
        <title>Whole genome sequence of Staphylococcus saprophyticus reveals the pathogenesis of uncomplicated urinary tract infection.</title>
        <authorList>
            <person name="Kuroda M."/>
            <person name="Yamashita A."/>
            <person name="Hirakawa H."/>
            <person name="Kumano M."/>
            <person name="Morikawa K."/>
            <person name="Higashide M."/>
            <person name="Maruyama A."/>
            <person name="Inose Y."/>
            <person name="Matoba K."/>
            <person name="Toh H."/>
            <person name="Kuhara S."/>
            <person name="Hattori M."/>
            <person name="Ohta T."/>
        </authorList>
    </citation>
    <scope>NUCLEOTIDE SEQUENCE [LARGE SCALE GENOMIC DNA]</scope>
    <source>
        <strain>ATCC 15305 / DSM 20229 / NCIMB 8711 / NCTC 7292 / S-41</strain>
    </source>
</reference>